<dbReference type="EC" id="2.4.2.18" evidence="1"/>
<dbReference type="EMBL" id="CP000553">
    <property type="protein sequence ID" value="ABM75485.1"/>
    <property type="molecule type" value="Genomic_DNA"/>
</dbReference>
<dbReference type="RefSeq" id="WP_011823621.1">
    <property type="nucleotide sequence ID" value="NC_008819.1"/>
</dbReference>
<dbReference type="SMR" id="A2C1X5"/>
<dbReference type="KEGG" id="pme:NATL1_09271"/>
<dbReference type="eggNOG" id="COG0547">
    <property type="taxonomic scope" value="Bacteria"/>
</dbReference>
<dbReference type="HOGENOM" id="CLU_034315_2_1_3"/>
<dbReference type="UniPathway" id="UPA00035">
    <property type="reaction ID" value="UER00041"/>
</dbReference>
<dbReference type="Proteomes" id="UP000002592">
    <property type="component" value="Chromosome"/>
</dbReference>
<dbReference type="GO" id="GO:0005829">
    <property type="term" value="C:cytosol"/>
    <property type="evidence" value="ECO:0007669"/>
    <property type="project" value="TreeGrafter"/>
</dbReference>
<dbReference type="GO" id="GO:0004048">
    <property type="term" value="F:anthranilate phosphoribosyltransferase activity"/>
    <property type="evidence" value="ECO:0007669"/>
    <property type="project" value="UniProtKB-UniRule"/>
</dbReference>
<dbReference type="GO" id="GO:0000287">
    <property type="term" value="F:magnesium ion binding"/>
    <property type="evidence" value="ECO:0007669"/>
    <property type="project" value="UniProtKB-UniRule"/>
</dbReference>
<dbReference type="GO" id="GO:0000162">
    <property type="term" value="P:L-tryptophan biosynthetic process"/>
    <property type="evidence" value="ECO:0007669"/>
    <property type="project" value="UniProtKB-UniRule"/>
</dbReference>
<dbReference type="FunFam" id="3.40.1030.10:FF:000002">
    <property type="entry name" value="Anthranilate phosphoribosyltransferase"/>
    <property type="match status" value="1"/>
</dbReference>
<dbReference type="Gene3D" id="3.40.1030.10">
    <property type="entry name" value="Nucleoside phosphorylase/phosphoribosyltransferase catalytic domain"/>
    <property type="match status" value="1"/>
</dbReference>
<dbReference type="Gene3D" id="1.20.970.10">
    <property type="entry name" value="Transferase, Pyrimidine Nucleoside Phosphorylase, Chain C"/>
    <property type="match status" value="1"/>
</dbReference>
<dbReference type="HAMAP" id="MF_00211">
    <property type="entry name" value="TrpD"/>
    <property type="match status" value="1"/>
</dbReference>
<dbReference type="InterPro" id="IPR005940">
    <property type="entry name" value="Anthranilate_Pribosyl_Tfrase"/>
</dbReference>
<dbReference type="InterPro" id="IPR000312">
    <property type="entry name" value="Glycosyl_Trfase_fam3"/>
</dbReference>
<dbReference type="InterPro" id="IPR017459">
    <property type="entry name" value="Glycosyl_Trfase_fam3_N_dom"/>
</dbReference>
<dbReference type="InterPro" id="IPR036320">
    <property type="entry name" value="Glycosyl_Trfase_fam3_N_dom_sf"/>
</dbReference>
<dbReference type="InterPro" id="IPR035902">
    <property type="entry name" value="Nuc_phospho_transferase"/>
</dbReference>
<dbReference type="NCBIfam" id="TIGR01245">
    <property type="entry name" value="trpD"/>
    <property type="match status" value="1"/>
</dbReference>
<dbReference type="PANTHER" id="PTHR43285">
    <property type="entry name" value="ANTHRANILATE PHOSPHORIBOSYLTRANSFERASE"/>
    <property type="match status" value="1"/>
</dbReference>
<dbReference type="PANTHER" id="PTHR43285:SF2">
    <property type="entry name" value="ANTHRANILATE PHOSPHORIBOSYLTRANSFERASE"/>
    <property type="match status" value="1"/>
</dbReference>
<dbReference type="Pfam" id="PF02885">
    <property type="entry name" value="Glycos_trans_3N"/>
    <property type="match status" value="1"/>
</dbReference>
<dbReference type="Pfam" id="PF00591">
    <property type="entry name" value="Glycos_transf_3"/>
    <property type="match status" value="1"/>
</dbReference>
<dbReference type="SUPFAM" id="SSF52418">
    <property type="entry name" value="Nucleoside phosphorylase/phosphoribosyltransferase catalytic domain"/>
    <property type="match status" value="1"/>
</dbReference>
<dbReference type="SUPFAM" id="SSF47648">
    <property type="entry name" value="Nucleoside phosphorylase/phosphoribosyltransferase N-terminal domain"/>
    <property type="match status" value="1"/>
</dbReference>
<feature type="chain" id="PRO_1000043044" description="Anthranilate phosphoribosyltransferase">
    <location>
        <begin position="1"/>
        <end position="345"/>
    </location>
</feature>
<feature type="binding site" evidence="1">
    <location>
        <position position="88"/>
    </location>
    <ligand>
        <name>5-phospho-alpha-D-ribose 1-diphosphate</name>
        <dbReference type="ChEBI" id="CHEBI:58017"/>
    </ligand>
</feature>
<feature type="binding site" evidence="1">
    <location>
        <position position="88"/>
    </location>
    <ligand>
        <name>anthranilate</name>
        <dbReference type="ChEBI" id="CHEBI:16567"/>
        <label>1</label>
    </ligand>
</feature>
<feature type="binding site" evidence="1">
    <location>
        <begin position="91"/>
        <end position="92"/>
    </location>
    <ligand>
        <name>5-phospho-alpha-D-ribose 1-diphosphate</name>
        <dbReference type="ChEBI" id="CHEBI:58017"/>
    </ligand>
</feature>
<feature type="binding site" evidence="1">
    <location>
        <position position="96"/>
    </location>
    <ligand>
        <name>5-phospho-alpha-D-ribose 1-diphosphate</name>
        <dbReference type="ChEBI" id="CHEBI:58017"/>
    </ligand>
</feature>
<feature type="binding site" evidence="1">
    <location>
        <begin position="98"/>
        <end position="101"/>
    </location>
    <ligand>
        <name>5-phospho-alpha-D-ribose 1-diphosphate</name>
        <dbReference type="ChEBI" id="CHEBI:58017"/>
    </ligand>
</feature>
<feature type="binding site" evidence="1">
    <location>
        <position position="100"/>
    </location>
    <ligand>
        <name>Mg(2+)</name>
        <dbReference type="ChEBI" id="CHEBI:18420"/>
        <label>1</label>
    </ligand>
</feature>
<feature type="binding site" evidence="1">
    <location>
        <begin position="116"/>
        <end position="124"/>
    </location>
    <ligand>
        <name>5-phospho-alpha-D-ribose 1-diphosphate</name>
        <dbReference type="ChEBI" id="CHEBI:58017"/>
    </ligand>
</feature>
<feature type="binding site" evidence="1">
    <location>
        <position position="119"/>
    </location>
    <ligand>
        <name>anthranilate</name>
        <dbReference type="ChEBI" id="CHEBI:16567"/>
        <label>1</label>
    </ligand>
</feature>
<feature type="binding site" evidence="1">
    <location>
        <position position="128"/>
    </location>
    <ligand>
        <name>5-phospho-alpha-D-ribose 1-diphosphate</name>
        <dbReference type="ChEBI" id="CHEBI:58017"/>
    </ligand>
</feature>
<feature type="binding site" evidence="1">
    <location>
        <position position="174"/>
    </location>
    <ligand>
        <name>anthranilate</name>
        <dbReference type="ChEBI" id="CHEBI:16567"/>
        <label>2</label>
    </ligand>
</feature>
<feature type="binding site" evidence="1">
    <location>
        <position position="233"/>
    </location>
    <ligand>
        <name>Mg(2+)</name>
        <dbReference type="ChEBI" id="CHEBI:18420"/>
        <label>2</label>
    </ligand>
</feature>
<feature type="binding site" evidence="1">
    <location>
        <position position="234"/>
    </location>
    <ligand>
        <name>Mg(2+)</name>
        <dbReference type="ChEBI" id="CHEBI:18420"/>
        <label>1</label>
    </ligand>
</feature>
<feature type="binding site" evidence="1">
    <location>
        <position position="234"/>
    </location>
    <ligand>
        <name>Mg(2+)</name>
        <dbReference type="ChEBI" id="CHEBI:18420"/>
        <label>2</label>
    </ligand>
</feature>
<reference key="1">
    <citation type="journal article" date="2007" name="PLoS Genet.">
        <title>Patterns and implications of gene gain and loss in the evolution of Prochlorococcus.</title>
        <authorList>
            <person name="Kettler G.C."/>
            <person name="Martiny A.C."/>
            <person name="Huang K."/>
            <person name="Zucker J."/>
            <person name="Coleman M.L."/>
            <person name="Rodrigue S."/>
            <person name="Chen F."/>
            <person name="Lapidus A."/>
            <person name="Ferriera S."/>
            <person name="Johnson J."/>
            <person name="Steglich C."/>
            <person name="Church G.M."/>
            <person name="Richardson P."/>
            <person name="Chisholm S.W."/>
        </authorList>
    </citation>
    <scope>NUCLEOTIDE SEQUENCE [LARGE SCALE GENOMIC DNA]</scope>
    <source>
        <strain>NATL1A</strain>
    </source>
</reference>
<name>TRPD_PROM1</name>
<comment type="function">
    <text evidence="1">Catalyzes the transfer of the phosphoribosyl group of 5-phosphorylribose-1-pyrophosphate (PRPP) to anthranilate to yield N-(5'-phosphoribosyl)-anthranilate (PRA).</text>
</comment>
<comment type="catalytic activity">
    <reaction evidence="1">
        <text>N-(5-phospho-beta-D-ribosyl)anthranilate + diphosphate = 5-phospho-alpha-D-ribose 1-diphosphate + anthranilate</text>
        <dbReference type="Rhea" id="RHEA:11768"/>
        <dbReference type="ChEBI" id="CHEBI:16567"/>
        <dbReference type="ChEBI" id="CHEBI:18277"/>
        <dbReference type="ChEBI" id="CHEBI:33019"/>
        <dbReference type="ChEBI" id="CHEBI:58017"/>
        <dbReference type="EC" id="2.4.2.18"/>
    </reaction>
</comment>
<comment type="cofactor">
    <cofactor evidence="1">
        <name>Mg(2+)</name>
        <dbReference type="ChEBI" id="CHEBI:18420"/>
    </cofactor>
    <text evidence="1">Binds 2 magnesium ions per monomer.</text>
</comment>
<comment type="pathway">
    <text evidence="1">Amino-acid biosynthesis; L-tryptophan biosynthesis; L-tryptophan from chorismate: step 2/5.</text>
</comment>
<comment type="subunit">
    <text evidence="1">Homodimer.</text>
</comment>
<comment type="similarity">
    <text evidence="1">Belongs to the anthranilate phosphoribosyltransferase family.</text>
</comment>
<keyword id="KW-0028">Amino-acid biosynthesis</keyword>
<keyword id="KW-0057">Aromatic amino acid biosynthesis</keyword>
<keyword id="KW-0328">Glycosyltransferase</keyword>
<keyword id="KW-0460">Magnesium</keyword>
<keyword id="KW-0479">Metal-binding</keyword>
<keyword id="KW-0808">Transferase</keyword>
<keyword id="KW-0822">Tryptophan biosynthesis</keyword>
<sequence length="345" mass="36595">MTILNPITFPVILESLLASNDLTEEQSKFLMNSWLENKIEPVQTGAFLAALRAKGVSGDELSAMAKILQDASTTPSDLPSFDLVDTCGTGGDGANTFNISTGVAFVSAALGVKIAKHGNRSASGKVGSADVLENLGLPLNVSSGKVVEALKKLGITFLFAPSWHPSLVNLAPLRKSLGVRTIFNLLGPLVNPLRPKSQVLGVAKADLLDPMSVALKGMGLKRAVVVHGAGGLDEASLAGANQFRFLDKDVIRSEIIKPGDLGLTQISNESLKGDDLKTNSHILKSLLNGEGNQYHKEVVALNTALVLWVSGTEDDLSSGVKRALDCLNTDKSWLLFEQLRDFLAT</sequence>
<accession>A2C1X5</accession>
<proteinExistence type="inferred from homology"/>
<organism>
    <name type="scientific">Prochlorococcus marinus (strain NATL1A)</name>
    <dbReference type="NCBI Taxonomy" id="167555"/>
    <lineage>
        <taxon>Bacteria</taxon>
        <taxon>Bacillati</taxon>
        <taxon>Cyanobacteriota</taxon>
        <taxon>Cyanophyceae</taxon>
        <taxon>Synechococcales</taxon>
        <taxon>Prochlorococcaceae</taxon>
        <taxon>Prochlorococcus</taxon>
    </lineage>
</organism>
<gene>
    <name evidence="1" type="primary">trpD</name>
    <name type="ordered locus">NATL1_09271</name>
</gene>
<protein>
    <recommendedName>
        <fullName evidence="1">Anthranilate phosphoribosyltransferase</fullName>
        <ecNumber evidence="1">2.4.2.18</ecNumber>
    </recommendedName>
</protein>
<evidence type="ECO:0000255" key="1">
    <source>
        <dbReference type="HAMAP-Rule" id="MF_00211"/>
    </source>
</evidence>